<evidence type="ECO:0000255" key="1">
    <source>
        <dbReference type="HAMAP-Rule" id="MF_01916"/>
    </source>
</evidence>
<gene>
    <name type="primary">cls</name>
    <name type="ordered locus">GK0820</name>
</gene>
<sequence>MRNTSRVAILVVIVGALLALTNGFWEGKLLGLFSVLMSCSVIFIALVISLENRKPAQTIAWLAVLGSFPIVGFLFYLLFGRNYWQQRRYKKKADFDEAVLLKFQEPSPIAVERLPMAPHQRPLLRLAYRIGQHPVSLASQTAVLTNGEETFSSIFAELEKAEHHIHLEYYIVRHDEIGQQLKRVLMEKARQGVRVRFLYDAVGSWKLSNAYIEELRAAGVEMIPFSPVRLPFLSNQINFRNHRKIIVIDGGVGFVGGLNIGDEYLGKNKYFGFWRDTHLLIRGEAVRTLQLIFLQDWYYMTGERLLTPDYLSPPLIVEEGQGGVQLIAGGPDQKWEVIKQLYFAMITSAKRSIWVASPYFVPDEDILTALKVAALSGIDVRLLAPKRPDKKIVFYASRSYFPELLEAGVKIYEYEKGFLHSKVIVVDGELASIGTANMDMRSFHLNFEVNAFLYYTDSIHKLVRDFLEDFRHASMIDYEQFQQRPFRVRIAESVSRLLSPLL</sequence>
<accession>Q5L1S5</accession>
<reference key="1">
    <citation type="journal article" date="2004" name="Nucleic Acids Res.">
        <title>Thermoadaptation trait revealed by the genome sequence of thermophilic Geobacillus kaustophilus.</title>
        <authorList>
            <person name="Takami H."/>
            <person name="Takaki Y."/>
            <person name="Chee G.-J."/>
            <person name="Nishi S."/>
            <person name="Shimamura S."/>
            <person name="Suzuki H."/>
            <person name="Matsui S."/>
            <person name="Uchiyama I."/>
        </authorList>
    </citation>
    <scope>NUCLEOTIDE SEQUENCE [LARGE SCALE GENOMIC DNA]</scope>
    <source>
        <strain>HTA426</strain>
    </source>
</reference>
<name>CLS_GEOKA</name>
<keyword id="KW-1003">Cell membrane</keyword>
<keyword id="KW-0444">Lipid biosynthesis</keyword>
<keyword id="KW-0443">Lipid metabolism</keyword>
<keyword id="KW-0472">Membrane</keyword>
<keyword id="KW-0594">Phospholipid biosynthesis</keyword>
<keyword id="KW-1208">Phospholipid metabolism</keyword>
<keyword id="KW-1185">Reference proteome</keyword>
<keyword id="KW-0677">Repeat</keyword>
<keyword id="KW-0808">Transferase</keyword>
<keyword id="KW-0812">Transmembrane</keyword>
<keyword id="KW-1133">Transmembrane helix</keyword>
<comment type="function">
    <text evidence="1">Catalyzes the reversible phosphatidyl group transfer from one phosphatidylglycerol molecule to another to form cardiolipin (CL) (diphosphatidylglycerol) and glycerol.</text>
</comment>
<comment type="catalytic activity">
    <reaction evidence="1">
        <text>2 a 1,2-diacyl-sn-glycero-3-phospho-(1'-sn-glycerol) = a cardiolipin + glycerol</text>
        <dbReference type="Rhea" id="RHEA:31451"/>
        <dbReference type="ChEBI" id="CHEBI:17754"/>
        <dbReference type="ChEBI" id="CHEBI:62237"/>
        <dbReference type="ChEBI" id="CHEBI:64716"/>
    </reaction>
</comment>
<comment type="subcellular location">
    <subcellularLocation>
        <location evidence="1">Cell membrane</location>
        <topology evidence="1">Multi-pass membrane protein</topology>
    </subcellularLocation>
</comment>
<comment type="similarity">
    <text evidence="1">Belongs to the phospholipase D family. Cardiolipin synthase subfamily.</text>
</comment>
<dbReference type="EC" id="2.7.8.-" evidence="1"/>
<dbReference type="EMBL" id="BA000043">
    <property type="protein sequence ID" value="BAD75105.1"/>
    <property type="molecule type" value="Genomic_DNA"/>
</dbReference>
<dbReference type="RefSeq" id="WP_011230321.1">
    <property type="nucleotide sequence ID" value="NC_006510.1"/>
</dbReference>
<dbReference type="SMR" id="Q5L1S5"/>
<dbReference type="STRING" id="235909.GK0820"/>
<dbReference type="GeneID" id="32062768"/>
<dbReference type="KEGG" id="gka:GK0820"/>
<dbReference type="eggNOG" id="COG1502">
    <property type="taxonomic scope" value="Bacteria"/>
</dbReference>
<dbReference type="HOGENOM" id="CLU_038053_1_1_9"/>
<dbReference type="Proteomes" id="UP000001172">
    <property type="component" value="Chromosome"/>
</dbReference>
<dbReference type="GO" id="GO:0005886">
    <property type="term" value="C:plasma membrane"/>
    <property type="evidence" value="ECO:0007669"/>
    <property type="project" value="UniProtKB-SubCell"/>
</dbReference>
<dbReference type="GO" id="GO:0008808">
    <property type="term" value="F:cardiolipin synthase activity"/>
    <property type="evidence" value="ECO:0007669"/>
    <property type="project" value="InterPro"/>
</dbReference>
<dbReference type="GO" id="GO:0032049">
    <property type="term" value="P:cardiolipin biosynthetic process"/>
    <property type="evidence" value="ECO:0007669"/>
    <property type="project" value="InterPro"/>
</dbReference>
<dbReference type="CDD" id="cd09110">
    <property type="entry name" value="PLDc_CLS_1"/>
    <property type="match status" value="1"/>
</dbReference>
<dbReference type="CDD" id="cd09112">
    <property type="entry name" value="PLDc_CLS_2"/>
    <property type="match status" value="1"/>
</dbReference>
<dbReference type="FunFam" id="3.30.870.10:FF:000014">
    <property type="entry name" value="Cardiolipin synthase"/>
    <property type="match status" value="1"/>
</dbReference>
<dbReference type="FunFam" id="3.30.870.10:FF:000021">
    <property type="entry name" value="Cardiolipin synthase"/>
    <property type="match status" value="1"/>
</dbReference>
<dbReference type="Gene3D" id="3.30.870.10">
    <property type="entry name" value="Endonuclease Chain A"/>
    <property type="match status" value="2"/>
</dbReference>
<dbReference type="HAMAP" id="MF_01916">
    <property type="entry name" value="Cardiolipin_synth_Cls"/>
    <property type="match status" value="1"/>
</dbReference>
<dbReference type="InterPro" id="IPR030874">
    <property type="entry name" value="Cardiolipin_synth_Firmi"/>
</dbReference>
<dbReference type="InterPro" id="IPR022924">
    <property type="entry name" value="Cardiolipin_synthase"/>
</dbReference>
<dbReference type="InterPro" id="IPR027379">
    <property type="entry name" value="CLS_N"/>
</dbReference>
<dbReference type="InterPro" id="IPR025202">
    <property type="entry name" value="PLD-like_dom"/>
</dbReference>
<dbReference type="InterPro" id="IPR001736">
    <property type="entry name" value="PLipase_D/transphosphatidylase"/>
</dbReference>
<dbReference type="NCBIfam" id="TIGR04265">
    <property type="entry name" value="bac_cardiolipin"/>
    <property type="match status" value="1"/>
</dbReference>
<dbReference type="PANTHER" id="PTHR21248">
    <property type="entry name" value="CARDIOLIPIN SYNTHASE"/>
    <property type="match status" value="1"/>
</dbReference>
<dbReference type="PANTHER" id="PTHR21248:SF20">
    <property type="entry name" value="CARDIOLIPIN SYNTHASE YWIE-RELATED"/>
    <property type="match status" value="1"/>
</dbReference>
<dbReference type="Pfam" id="PF13091">
    <property type="entry name" value="PLDc_2"/>
    <property type="match status" value="2"/>
</dbReference>
<dbReference type="Pfam" id="PF13396">
    <property type="entry name" value="PLDc_N"/>
    <property type="match status" value="1"/>
</dbReference>
<dbReference type="SMART" id="SM00155">
    <property type="entry name" value="PLDc"/>
    <property type="match status" value="2"/>
</dbReference>
<dbReference type="SUPFAM" id="SSF56024">
    <property type="entry name" value="Phospholipase D/nuclease"/>
    <property type="match status" value="2"/>
</dbReference>
<dbReference type="PROSITE" id="PS50035">
    <property type="entry name" value="PLD"/>
    <property type="match status" value="2"/>
</dbReference>
<protein>
    <recommendedName>
        <fullName evidence="1">Cardiolipin synthase</fullName>
        <shortName evidence="1">CL synthase</shortName>
        <ecNumber evidence="1">2.7.8.-</ecNumber>
    </recommendedName>
</protein>
<feature type="chain" id="PRO_1000058488" description="Cardiolipin synthase">
    <location>
        <begin position="1"/>
        <end position="502"/>
    </location>
</feature>
<feature type="transmembrane region" description="Helical" evidence="1">
    <location>
        <begin position="7"/>
        <end position="27"/>
    </location>
</feature>
<feature type="transmembrane region" description="Helical" evidence="1">
    <location>
        <begin position="29"/>
        <end position="49"/>
    </location>
</feature>
<feature type="transmembrane region" description="Helical" evidence="1">
    <location>
        <begin position="59"/>
        <end position="79"/>
    </location>
</feature>
<feature type="domain" description="PLD phosphodiesterase 1" evidence="1">
    <location>
        <begin position="237"/>
        <end position="264"/>
    </location>
</feature>
<feature type="domain" description="PLD phosphodiesterase 2" evidence="1">
    <location>
        <begin position="415"/>
        <end position="442"/>
    </location>
</feature>
<feature type="active site" evidence="1">
    <location>
        <position position="242"/>
    </location>
</feature>
<feature type="active site" evidence="1">
    <location>
        <position position="244"/>
    </location>
</feature>
<feature type="active site" evidence="1">
    <location>
        <position position="249"/>
    </location>
</feature>
<feature type="active site" evidence="1">
    <location>
        <position position="420"/>
    </location>
</feature>
<feature type="active site" evidence="1">
    <location>
        <position position="422"/>
    </location>
</feature>
<feature type="active site" evidence="1">
    <location>
        <position position="427"/>
    </location>
</feature>
<organism>
    <name type="scientific">Geobacillus kaustophilus (strain HTA426)</name>
    <dbReference type="NCBI Taxonomy" id="235909"/>
    <lineage>
        <taxon>Bacteria</taxon>
        <taxon>Bacillati</taxon>
        <taxon>Bacillota</taxon>
        <taxon>Bacilli</taxon>
        <taxon>Bacillales</taxon>
        <taxon>Anoxybacillaceae</taxon>
        <taxon>Geobacillus</taxon>
        <taxon>Geobacillus thermoleovorans group</taxon>
    </lineage>
</organism>
<proteinExistence type="inferred from homology"/>